<protein>
    <recommendedName>
        <fullName>Ankyrin repeat domain-containing protein 54</fullName>
    </recommendedName>
    <alternativeName>
        <fullName>Lyn-interacting ankyrin repeat protein</fullName>
    </alternativeName>
</protein>
<gene>
    <name type="primary">Ankrd54</name>
    <name type="synonym">Liar</name>
</gene>
<name>ANR54_MOUSE</name>
<accession>Q91WK7</accession>
<accession>Q3UPC5</accession>
<accession>Q3UZL7</accession>
<keyword id="KW-0007">Acetylation</keyword>
<keyword id="KW-0040">ANK repeat</keyword>
<keyword id="KW-0963">Cytoplasm</keyword>
<keyword id="KW-0539">Nucleus</keyword>
<keyword id="KW-0597">Phosphoprotein</keyword>
<keyword id="KW-1185">Reference proteome</keyword>
<keyword id="KW-0677">Repeat</keyword>
<organism>
    <name type="scientific">Mus musculus</name>
    <name type="common">Mouse</name>
    <dbReference type="NCBI Taxonomy" id="10090"/>
    <lineage>
        <taxon>Eukaryota</taxon>
        <taxon>Metazoa</taxon>
        <taxon>Chordata</taxon>
        <taxon>Craniata</taxon>
        <taxon>Vertebrata</taxon>
        <taxon>Euteleostomi</taxon>
        <taxon>Mammalia</taxon>
        <taxon>Eutheria</taxon>
        <taxon>Euarchontoglires</taxon>
        <taxon>Glires</taxon>
        <taxon>Rodentia</taxon>
        <taxon>Myomorpha</taxon>
        <taxon>Muroidea</taxon>
        <taxon>Muridae</taxon>
        <taxon>Murinae</taxon>
        <taxon>Mus</taxon>
        <taxon>Mus</taxon>
    </lineage>
</organism>
<sequence length="299" mass="32486">MAATGGGADDESRSGRSSSDGECAVAPEPLAEAGGLVSFADFGVSLGSGAGLPGRSVGRAQSSLRYLQVLWQQDVEPRDELRCKIPAGRLRRAARPHRRLGPTGKEVHALKRLRDSANANDVETVQQLLEDGADPCAADDKGRTALHFASCNGNDQIVQLLLDHGADPNQQDGLGNTPLHLAACTNHVPVITTLLRGGARVDALDRAGRTPLHLAKSKLNILQEGHSQCLEAVRLEVKQIIHMLREYLERLGRHEQRERLDDLCTRLQMTSTKEQVDEVTDLLASFTSLSLQMQSMEKR</sequence>
<proteinExistence type="evidence at protein level"/>
<comment type="function">
    <text evidence="4">Plays an important role in regulating intracellular signaling events associated with erythroid terminal differentiation.</text>
</comment>
<comment type="subunit">
    <text evidence="4">Interacts (via ankyrin repeat region) with LYN (via SH3-domain) in an activation-independent status of LYN. Forms a multiprotein complex with LYN and HCLS1. Interacts with TSN2, VAV1, DBNL and LASP1.</text>
</comment>
<comment type="subcellular location">
    <subcellularLocation>
        <location evidence="4">Nucleus</location>
    </subcellularLocation>
    <subcellularLocation>
        <location evidence="4">Cytoplasm</location>
    </subcellularLocation>
    <subcellularLocation>
        <location evidence="4">Midbody</location>
    </subcellularLocation>
    <text>Shuttles between nucleus and cytoplasm during the cell cycle. EPO stimulation induces nuclear accumulation.</text>
</comment>
<comment type="tissue specificity">
    <text evidence="3 4">Expressed in a variety of hemopoietic cell lines and tissue with high levels in testis. Highly expressed in ciliated cells.</text>
</comment>
<comment type="developmental stage">
    <text>Expressed in brachial arches, maxillary process, fore and hind limb buds and in the developing gastrointestinal tract of day 10 embryos.</text>
</comment>
<comment type="sequence caution" evidence="5">
    <conflict type="frameshift">
        <sequence resource="EMBL-CDS" id="BAE25471"/>
    </conflict>
</comment>
<dbReference type="EMBL" id="AK133785">
    <property type="protein sequence ID" value="BAE21840.1"/>
    <property type="molecule type" value="mRNA"/>
</dbReference>
<dbReference type="EMBL" id="AK143625">
    <property type="protein sequence ID" value="BAE25471.1"/>
    <property type="status" value="ALT_FRAME"/>
    <property type="molecule type" value="mRNA"/>
</dbReference>
<dbReference type="EMBL" id="BC014743">
    <property type="protein sequence ID" value="AAH14743.1"/>
    <property type="molecule type" value="mRNA"/>
</dbReference>
<dbReference type="CCDS" id="CCDS37139.1"/>
<dbReference type="RefSeq" id="NP_659098.1">
    <property type="nucleotide sequence ID" value="NM_144849.1"/>
</dbReference>
<dbReference type="SMR" id="Q91WK7"/>
<dbReference type="BioGRID" id="230175">
    <property type="interactions" value="1"/>
</dbReference>
<dbReference type="CORUM" id="Q91WK7"/>
<dbReference type="FunCoup" id="Q91WK7">
    <property type="interactions" value="2830"/>
</dbReference>
<dbReference type="IntAct" id="Q91WK7">
    <property type="interactions" value="2"/>
</dbReference>
<dbReference type="STRING" id="10090.ENSMUSP00000047042"/>
<dbReference type="iPTMnet" id="Q91WK7"/>
<dbReference type="PhosphoSitePlus" id="Q91WK7"/>
<dbReference type="PaxDb" id="10090-ENSMUSP00000047042"/>
<dbReference type="ProteomicsDB" id="281883"/>
<dbReference type="Pumba" id="Q91WK7"/>
<dbReference type="Antibodypedia" id="26115">
    <property type="antibodies" value="121 antibodies from 27 providers"/>
</dbReference>
<dbReference type="DNASU" id="223690"/>
<dbReference type="Ensembl" id="ENSMUST00000040676.11">
    <property type="protein sequence ID" value="ENSMUSP00000047042.5"/>
    <property type="gene ID" value="ENSMUSG00000033055.13"/>
</dbReference>
<dbReference type="GeneID" id="223690"/>
<dbReference type="KEGG" id="mmu:223690"/>
<dbReference type="UCSC" id="uc007wsi.1">
    <property type="organism name" value="mouse"/>
</dbReference>
<dbReference type="AGR" id="MGI:2444209"/>
<dbReference type="CTD" id="129138"/>
<dbReference type="MGI" id="MGI:2444209">
    <property type="gene designation" value="Ankrd54"/>
</dbReference>
<dbReference type="VEuPathDB" id="HostDB:ENSMUSG00000033055"/>
<dbReference type="eggNOG" id="KOG0504">
    <property type="taxonomic scope" value="Eukaryota"/>
</dbReference>
<dbReference type="GeneTree" id="ENSGT00940000157805"/>
<dbReference type="HOGENOM" id="CLU_072816_0_0_1"/>
<dbReference type="InParanoid" id="Q91WK7"/>
<dbReference type="OMA" id="IQMRPSG"/>
<dbReference type="OrthoDB" id="496981at2759"/>
<dbReference type="PhylomeDB" id="Q91WK7"/>
<dbReference type="TreeFam" id="TF330790"/>
<dbReference type="BioGRID-ORCS" id="223690">
    <property type="hits" value="2 hits in 77 CRISPR screens"/>
</dbReference>
<dbReference type="PRO" id="PR:Q91WK7"/>
<dbReference type="Proteomes" id="UP000000589">
    <property type="component" value="Chromosome 15"/>
</dbReference>
<dbReference type="RNAct" id="Q91WK7">
    <property type="molecule type" value="protein"/>
</dbReference>
<dbReference type="Bgee" id="ENSMUSG00000033055">
    <property type="expression patterns" value="Expressed in spermatocyte and 235 other cell types or tissues"/>
</dbReference>
<dbReference type="ExpressionAtlas" id="Q91WK7">
    <property type="expression patterns" value="baseline and differential"/>
</dbReference>
<dbReference type="GO" id="GO:0005737">
    <property type="term" value="C:cytoplasm"/>
    <property type="evidence" value="ECO:0000314"/>
    <property type="project" value="MGI"/>
</dbReference>
<dbReference type="GO" id="GO:0030496">
    <property type="term" value="C:midbody"/>
    <property type="evidence" value="ECO:0000314"/>
    <property type="project" value="MGI"/>
</dbReference>
<dbReference type="GO" id="GO:0005634">
    <property type="term" value="C:nucleus"/>
    <property type="evidence" value="ECO:0000314"/>
    <property type="project" value="MGI"/>
</dbReference>
<dbReference type="GO" id="GO:0019887">
    <property type="term" value="F:protein kinase regulator activity"/>
    <property type="evidence" value="ECO:0000314"/>
    <property type="project" value="MGI"/>
</dbReference>
<dbReference type="GO" id="GO:0044877">
    <property type="term" value="F:protein-containing complex binding"/>
    <property type="evidence" value="ECO:0000353"/>
    <property type="project" value="MGI"/>
</dbReference>
<dbReference type="GO" id="GO:0006913">
    <property type="term" value="P:nucleocytoplasmic transport"/>
    <property type="evidence" value="ECO:0000314"/>
    <property type="project" value="MGI"/>
</dbReference>
<dbReference type="GO" id="GO:0045648">
    <property type="term" value="P:positive regulation of erythrocyte differentiation"/>
    <property type="evidence" value="ECO:0000314"/>
    <property type="project" value="MGI"/>
</dbReference>
<dbReference type="GO" id="GO:1902531">
    <property type="term" value="P:regulation of intracellular signal transduction"/>
    <property type="evidence" value="ECO:0000314"/>
    <property type="project" value="MGI"/>
</dbReference>
<dbReference type="FunFam" id="1.25.40.20:FF:000108">
    <property type="entry name" value="Ankyrin repeat domain-containing protein 54"/>
    <property type="match status" value="1"/>
</dbReference>
<dbReference type="FunFam" id="1.25.40.20:FF:000162">
    <property type="entry name" value="Ankyrin repeat domain-containing protein 54"/>
    <property type="match status" value="1"/>
</dbReference>
<dbReference type="Gene3D" id="1.25.40.20">
    <property type="entry name" value="Ankyrin repeat-containing domain"/>
    <property type="match status" value="2"/>
</dbReference>
<dbReference type="InterPro" id="IPR002110">
    <property type="entry name" value="Ankyrin_rpt"/>
</dbReference>
<dbReference type="InterPro" id="IPR036770">
    <property type="entry name" value="Ankyrin_rpt-contain_sf"/>
</dbReference>
<dbReference type="PANTHER" id="PTHR24197:SF44">
    <property type="entry name" value="ANKYRIN REPEAT DOMAIN-CONTAINING PROTEIN 54"/>
    <property type="match status" value="1"/>
</dbReference>
<dbReference type="PANTHER" id="PTHR24197">
    <property type="entry name" value="ANKYRIN REPEAT DOMAIN-CONTAINING PROTEIN 61"/>
    <property type="match status" value="1"/>
</dbReference>
<dbReference type="Pfam" id="PF00023">
    <property type="entry name" value="Ank"/>
    <property type="match status" value="1"/>
</dbReference>
<dbReference type="Pfam" id="PF12796">
    <property type="entry name" value="Ank_2"/>
    <property type="match status" value="1"/>
</dbReference>
<dbReference type="SMART" id="SM00248">
    <property type="entry name" value="ANK"/>
    <property type="match status" value="4"/>
</dbReference>
<dbReference type="SUPFAM" id="SSF48403">
    <property type="entry name" value="Ankyrin repeat"/>
    <property type="match status" value="1"/>
</dbReference>
<dbReference type="PROSITE" id="PS50297">
    <property type="entry name" value="ANK_REP_REGION"/>
    <property type="match status" value="1"/>
</dbReference>
<dbReference type="PROSITE" id="PS50088">
    <property type="entry name" value="ANK_REPEAT"/>
    <property type="match status" value="2"/>
</dbReference>
<reference key="1">
    <citation type="journal article" date="2005" name="Science">
        <title>The transcriptional landscape of the mammalian genome.</title>
        <authorList>
            <person name="Carninci P."/>
            <person name="Kasukawa T."/>
            <person name="Katayama S."/>
            <person name="Gough J."/>
            <person name="Frith M.C."/>
            <person name="Maeda N."/>
            <person name="Oyama R."/>
            <person name="Ravasi T."/>
            <person name="Lenhard B."/>
            <person name="Wells C."/>
            <person name="Kodzius R."/>
            <person name="Shimokawa K."/>
            <person name="Bajic V.B."/>
            <person name="Brenner S.E."/>
            <person name="Batalov S."/>
            <person name="Forrest A.R."/>
            <person name="Zavolan M."/>
            <person name="Davis M.J."/>
            <person name="Wilming L.G."/>
            <person name="Aidinis V."/>
            <person name="Allen J.E."/>
            <person name="Ambesi-Impiombato A."/>
            <person name="Apweiler R."/>
            <person name="Aturaliya R.N."/>
            <person name="Bailey T.L."/>
            <person name="Bansal M."/>
            <person name="Baxter L."/>
            <person name="Beisel K.W."/>
            <person name="Bersano T."/>
            <person name="Bono H."/>
            <person name="Chalk A.M."/>
            <person name="Chiu K.P."/>
            <person name="Choudhary V."/>
            <person name="Christoffels A."/>
            <person name="Clutterbuck D.R."/>
            <person name="Crowe M.L."/>
            <person name="Dalla E."/>
            <person name="Dalrymple B.P."/>
            <person name="de Bono B."/>
            <person name="Della Gatta G."/>
            <person name="di Bernardo D."/>
            <person name="Down T."/>
            <person name="Engstrom P."/>
            <person name="Fagiolini M."/>
            <person name="Faulkner G."/>
            <person name="Fletcher C.F."/>
            <person name="Fukushima T."/>
            <person name="Furuno M."/>
            <person name="Futaki S."/>
            <person name="Gariboldi M."/>
            <person name="Georgii-Hemming P."/>
            <person name="Gingeras T.R."/>
            <person name="Gojobori T."/>
            <person name="Green R.E."/>
            <person name="Gustincich S."/>
            <person name="Harbers M."/>
            <person name="Hayashi Y."/>
            <person name="Hensch T.K."/>
            <person name="Hirokawa N."/>
            <person name="Hill D."/>
            <person name="Huminiecki L."/>
            <person name="Iacono M."/>
            <person name="Ikeo K."/>
            <person name="Iwama A."/>
            <person name="Ishikawa T."/>
            <person name="Jakt M."/>
            <person name="Kanapin A."/>
            <person name="Katoh M."/>
            <person name="Kawasawa Y."/>
            <person name="Kelso J."/>
            <person name="Kitamura H."/>
            <person name="Kitano H."/>
            <person name="Kollias G."/>
            <person name="Krishnan S.P."/>
            <person name="Kruger A."/>
            <person name="Kummerfeld S.K."/>
            <person name="Kurochkin I.V."/>
            <person name="Lareau L.F."/>
            <person name="Lazarevic D."/>
            <person name="Lipovich L."/>
            <person name="Liu J."/>
            <person name="Liuni S."/>
            <person name="McWilliam S."/>
            <person name="Madan Babu M."/>
            <person name="Madera M."/>
            <person name="Marchionni L."/>
            <person name="Matsuda H."/>
            <person name="Matsuzawa S."/>
            <person name="Miki H."/>
            <person name="Mignone F."/>
            <person name="Miyake S."/>
            <person name="Morris K."/>
            <person name="Mottagui-Tabar S."/>
            <person name="Mulder N."/>
            <person name="Nakano N."/>
            <person name="Nakauchi H."/>
            <person name="Ng P."/>
            <person name="Nilsson R."/>
            <person name="Nishiguchi S."/>
            <person name="Nishikawa S."/>
            <person name="Nori F."/>
            <person name="Ohara O."/>
            <person name="Okazaki Y."/>
            <person name="Orlando V."/>
            <person name="Pang K.C."/>
            <person name="Pavan W.J."/>
            <person name="Pavesi G."/>
            <person name="Pesole G."/>
            <person name="Petrovsky N."/>
            <person name="Piazza S."/>
            <person name="Reed J."/>
            <person name="Reid J.F."/>
            <person name="Ring B.Z."/>
            <person name="Ringwald M."/>
            <person name="Rost B."/>
            <person name="Ruan Y."/>
            <person name="Salzberg S.L."/>
            <person name="Sandelin A."/>
            <person name="Schneider C."/>
            <person name="Schoenbach C."/>
            <person name="Sekiguchi K."/>
            <person name="Semple C.A."/>
            <person name="Seno S."/>
            <person name="Sessa L."/>
            <person name="Sheng Y."/>
            <person name="Shibata Y."/>
            <person name="Shimada H."/>
            <person name="Shimada K."/>
            <person name="Silva D."/>
            <person name="Sinclair B."/>
            <person name="Sperling S."/>
            <person name="Stupka E."/>
            <person name="Sugiura K."/>
            <person name="Sultana R."/>
            <person name="Takenaka Y."/>
            <person name="Taki K."/>
            <person name="Tammoja K."/>
            <person name="Tan S.L."/>
            <person name="Tang S."/>
            <person name="Taylor M.S."/>
            <person name="Tegner J."/>
            <person name="Teichmann S.A."/>
            <person name="Ueda H.R."/>
            <person name="van Nimwegen E."/>
            <person name="Verardo R."/>
            <person name="Wei C.L."/>
            <person name="Yagi K."/>
            <person name="Yamanishi H."/>
            <person name="Zabarovsky E."/>
            <person name="Zhu S."/>
            <person name="Zimmer A."/>
            <person name="Hide W."/>
            <person name="Bult C."/>
            <person name="Grimmond S.M."/>
            <person name="Teasdale R.D."/>
            <person name="Liu E.T."/>
            <person name="Brusic V."/>
            <person name="Quackenbush J."/>
            <person name="Wahlestedt C."/>
            <person name="Mattick J.S."/>
            <person name="Hume D.A."/>
            <person name="Kai C."/>
            <person name="Sasaki D."/>
            <person name="Tomaru Y."/>
            <person name="Fukuda S."/>
            <person name="Kanamori-Katayama M."/>
            <person name="Suzuki M."/>
            <person name="Aoki J."/>
            <person name="Arakawa T."/>
            <person name="Iida J."/>
            <person name="Imamura K."/>
            <person name="Itoh M."/>
            <person name="Kato T."/>
            <person name="Kawaji H."/>
            <person name="Kawagashira N."/>
            <person name="Kawashima T."/>
            <person name="Kojima M."/>
            <person name="Kondo S."/>
            <person name="Konno H."/>
            <person name="Nakano K."/>
            <person name="Ninomiya N."/>
            <person name="Nishio T."/>
            <person name="Okada M."/>
            <person name="Plessy C."/>
            <person name="Shibata K."/>
            <person name="Shiraki T."/>
            <person name="Suzuki S."/>
            <person name="Tagami M."/>
            <person name="Waki K."/>
            <person name="Watahiki A."/>
            <person name="Okamura-Oho Y."/>
            <person name="Suzuki H."/>
            <person name="Kawai J."/>
            <person name="Hayashizaki Y."/>
        </authorList>
    </citation>
    <scope>NUCLEOTIDE SEQUENCE [LARGE SCALE MRNA]</scope>
    <source>
        <strain>C57BL/6J</strain>
        <tissue>Spleen</tissue>
    </source>
</reference>
<reference key="2">
    <citation type="journal article" date="2004" name="Genome Res.">
        <title>The status, quality, and expansion of the NIH full-length cDNA project: the Mammalian Gene Collection (MGC).</title>
        <authorList>
            <consortium name="The MGC Project Team"/>
        </authorList>
    </citation>
    <scope>NUCLEOTIDE SEQUENCE [LARGE SCALE MRNA]</scope>
    <source>
        <tissue>Eye</tissue>
    </source>
</reference>
<reference key="3">
    <citation type="journal article" date="2008" name="Physiol. Genomics">
        <title>Tissue expression patterns identify mouse cilia genes.</title>
        <authorList>
            <person name="McClintock T.S."/>
            <person name="Glasser C.E."/>
            <person name="Bose S.C."/>
            <person name="Bergman D.A."/>
        </authorList>
    </citation>
    <scope>TISSUE SPECIFICITY</scope>
</reference>
<reference key="4">
    <citation type="journal article" date="2009" name="Blood">
        <title>Liar, a novel Lyn-binding nuclear/cytoplasmic shuttling protein that influences erythropoietin-induced differentiation.</title>
        <authorList>
            <person name="Samuels A.L."/>
            <person name="Klinken S.P."/>
            <person name="Ingley E."/>
        </authorList>
    </citation>
    <scope>FUNCTION</scope>
    <scope>TISSUE SPECIFICITY</scope>
    <scope>SUBCELLULAR LOCATION</scope>
    <scope>MUTAGENESIS OF ARG-98; ARG-99; LEU-289 AND LEU-291</scope>
    <scope>INTERACTION WITH LYN; HCLS1; ITSN2; VAV1; DBNL AND LASP1</scope>
</reference>
<evidence type="ECO:0000250" key="1">
    <source>
        <dbReference type="UniProtKB" id="Q6NXT1"/>
    </source>
</evidence>
<evidence type="ECO:0000256" key="2">
    <source>
        <dbReference type="SAM" id="MobiDB-lite"/>
    </source>
</evidence>
<evidence type="ECO:0000269" key="3">
    <source>
    </source>
</evidence>
<evidence type="ECO:0000269" key="4">
    <source>
    </source>
</evidence>
<evidence type="ECO:0000305" key="5"/>
<feature type="initiator methionine" description="Removed" evidence="1">
    <location>
        <position position="1"/>
    </location>
</feature>
<feature type="chain" id="PRO_0000274494" description="Ankyrin repeat domain-containing protein 54">
    <location>
        <begin position="2"/>
        <end position="299"/>
    </location>
</feature>
<feature type="repeat" description="ANK 1">
    <location>
        <begin position="108"/>
        <end position="137"/>
    </location>
</feature>
<feature type="repeat" description="ANK 2">
    <location>
        <begin position="141"/>
        <end position="170"/>
    </location>
</feature>
<feature type="repeat" description="ANK 3">
    <location>
        <begin position="174"/>
        <end position="203"/>
    </location>
</feature>
<feature type="repeat" description="ANK 4">
    <location>
        <begin position="207"/>
        <end position="239"/>
    </location>
</feature>
<feature type="region of interest" description="Disordered" evidence="2">
    <location>
        <begin position="1"/>
        <end position="27"/>
    </location>
</feature>
<feature type="region of interest" description="LYN-binding">
    <location>
        <begin position="140"/>
        <end position="240"/>
    </location>
</feature>
<feature type="short sequence motif" description="Nuclear localization signal (NLS)">
    <location>
        <begin position="98"/>
        <end position="116"/>
    </location>
</feature>
<feature type="short sequence motif" description="Nuclear export signal (NES)">
    <location>
        <begin position="282"/>
        <end position="292"/>
    </location>
</feature>
<feature type="modified residue" description="N-acetylalanine" evidence="1">
    <location>
        <position position="2"/>
    </location>
</feature>
<feature type="modified residue" description="Phosphoserine" evidence="1">
    <location>
        <position position="62"/>
    </location>
</feature>
<feature type="mutagenesis site" description="Increases the cytoplasmic protein content; when associated with A-99." evidence="4">
    <original>R</original>
    <variation>A</variation>
    <location>
        <position position="98"/>
    </location>
</feature>
<feature type="mutagenesis site" description="Increases the cytoplasmic protein content; when associated with A-98." evidence="4">
    <original>R</original>
    <variation>A</variation>
    <location>
        <position position="99"/>
    </location>
</feature>
<feature type="mutagenesis site" description="Accumulation within the nucleus; when associated with A-291." evidence="4">
    <original>L</original>
    <variation>A</variation>
    <location>
        <position position="289"/>
    </location>
</feature>
<feature type="mutagenesis site" description="Accumulation within the nucleus; when associated with A-289." evidence="4">
    <original>L</original>
    <variation>A</variation>
    <location>
        <position position="291"/>
    </location>
</feature>
<feature type="sequence conflict" description="In Ref. 1; BAE21840." evidence="5" ref="1">
    <original>G</original>
    <variation>N</variation>
    <location>
        <position position="173"/>
    </location>
</feature>